<dbReference type="EMBL" id="AP009370">
    <property type="protein sequence ID" value="BAF50143.1"/>
    <property type="molecule type" value="Genomic_DNA"/>
</dbReference>
<dbReference type="RefSeq" id="YP_001123319.1">
    <property type="nucleotide sequence ID" value="NC_009269.1"/>
</dbReference>
<dbReference type="SMR" id="A4QKD8"/>
<dbReference type="GeneID" id="4961933"/>
<dbReference type="GO" id="GO:0009507">
    <property type="term" value="C:chloroplast"/>
    <property type="evidence" value="ECO:0007669"/>
    <property type="project" value="UniProtKB-SubCell"/>
</dbReference>
<dbReference type="GO" id="GO:1990904">
    <property type="term" value="C:ribonucleoprotein complex"/>
    <property type="evidence" value="ECO:0007669"/>
    <property type="project" value="UniProtKB-KW"/>
</dbReference>
<dbReference type="GO" id="GO:0005840">
    <property type="term" value="C:ribosome"/>
    <property type="evidence" value="ECO:0007669"/>
    <property type="project" value="UniProtKB-KW"/>
</dbReference>
<dbReference type="GO" id="GO:0019843">
    <property type="term" value="F:rRNA binding"/>
    <property type="evidence" value="ECO:0007669"/>
    <property type="project" value="UniProtKB-UniRule"/>
</dbReference>
<dbReference type="GO" id="GO:0003735">
    <property type="term" value="F:structural constituent of ribosome"/>
    <property type="evidence" value="ECO:0007669"/>
    <property type="project" value="InterPro"/>
</dbReference>
<dbReference type="GO" id="GO:0006412">
    <property type="term" value="P:translation"/>
    <property type="evidence" value="ECO:0007669"/>
    <property type="project" value="UniProtKB-UniRule"/>
</dbReference>
<dbReference type="FunFam" id="3.30.420.80:FF:000003">
    <property type="entry name" value="30S ribosomal protein S11, chloroplastic"/>
    <property type="match status" value="1"/>
</dbReference>
<dbReference type="Gene3D" id="3.30.420.80">
    <property type="entry name" value="Ribosomal protein S11"/>
    <property type="match status" value="1"/>
</dbReference>
<dbReference type="HAMAP" id="MF_01310">
    <property type="entry name" value="Ribosomal_uS11"/>
    <property type="match status" value="1"/>
</dbReference>
<dbReference type="InterPro" id="IPR001971">
    <property type="entry name" value="Ribosomal_uS11"/>
</dbReference>
<dbReference type="InterPro" id="IPR019981">
    <property type="entry name" value="Ribosomal_uS11_bac-type"/>
</dbReference>
<dbReference type="InterPro" id="IPR018102">
    <property type="entry name" value="Ribosomal_uS11_CS"/>
</dbReference>
<dbReference type="InterPro" id="IPR036967">
    <property type="entry name" value="Ribosomal_uS11_sf"/>
</dbReference>
<dbReference type="NCBIfam" id="NF003698">
    <property type="entry name" value="PRK05309.1"/>
    <property type="match status" value="1"/>
</dbReference>
<dbReference type="NCBIfam" id="TIGR03632">
    <property type="entry name" value="uS11_bact"/>
    <property type="match status" value="1"/>
</dbReference>
<dbReference type="PANTHER" id="PTHR11759">
    <property type="entry name" value="40S RIBOSOMAL PROTEIN S14/30S RIBOSOMAL PROTEIN S11"/>
    <property type="match status" value="1"/>
</dbReference>
<dbReference type="Pfam" id="PF00411">
    <property type="entry name" value="Ribosomal_S11"/>
    <property type="match status" value="1"/>
</dbReference>
<dbReference type="PIRSF" id="PIRSF002131">
    <property type="entry name" value="Ribosomal_S11"/>
    <property type="match status" value="1"/>
</dbReference>
<dbReference type="SUPFAM" id="SSF53137">
    <property type="entry name" value="Translational machinery components"/>
    <property type="match status" value="1"/>
</dbReference>
<dbReference type="PROSITE" id="PS00054">
    <property type="entry name" value="RIBOSOMAL_S11"/>
    <property type="match status" value="1"/>
</dbReference>
<gene>
    <name evidence="1" type="primary">rps11</name>
</gene>
<comment type="subunit">
    <text evidence="1">Part of the 30S ribosomal subunit.</text>
</comment>
<comment type="subcellular location">
    <subcellularLocation>
        <location>Plastid</location>
        <location>Chloroplast</location>
    </subcellularLocation>
</comment>
<comment type="similarity">
    <text evidence="1">Belongs to the universal ribosomal protein uS11 family.</text>
</comment>
<geneLocation type="chloroplast"/>
<reference key="1">
    <citation type="submission" date="2007-03" db="EMBL/GenBank/DDBJ databases">
        <title>Sequencing analysis of Barbarea verna chloroplast DNA.</title>
        <authorList>
            <person name="Hosouchi T."/>
            <person name="Tsuruoka H."/>
            <person name="Kotani H."/>
        </authorList>
    </citation>
    <scope>NUCLEOTIDE SEQUENCE [LARGE SCALE GENOMIC DNA]</scope>
</reference>
<name>RR11_BARVE</name>
<evidence type="ECO:0000255" key="1">
    <source>
        <dbReference type="HAMAP-Rule" id="MF_01310"/>
    </source>
</evidence>
<evidence type="ECO:0000256" key="2">
    <source>
        <dbReference type="SAM" id="MobiDB-lite"/>
    </source>
</evidence>
<evidence type="ECO:0000305" key="3"/>
<protein>
    <recommendedName>
        <fullName evidence="1">Small ribosomal subunit protein uS11c</fullName>
    </recommendedName>
    <alternativeName>
        <fullName evidence="3">30S ribosomal protein S11, chloroplastic</fullName>
    </alternativeName>
</protein>
<organism>
    <name type="scientific">Barbarea verna</name>
    <name type="common">Land cress</name>
    <name type="synonym">Erysimum vernum</name>
    <dbReference type="NCBI Taxonomy" id="50458"/>
    <lineage>
        <taxon>Eukaryota</taxon>
        <taxon>Viridiplantae</taxon>
        <taxon>Streptophyta</taxon>
        <taxon>Embryophyta</taxon>
        <taxon>Tracheophyta</taxon>
        <taxon>Spermatophyta</taxon>
        <taxon>Magnoliopsida</taxon>
        <taxon>eudicotyledons</taxon>
        <taxon>Gunneridae</taxon>
        <taxon>Pentapetalae</taxon>
        <taxon>rosids</taxon>
        <taxon>malvids</taxon>
        <taxon>Brassicales</taxon>
        <taxon>Brassicaceae</taxon>
        <taxon>Cardamineae</taxon>
        <taxon>Barbarea</taxon>
    </lineage>
</organism>
<accession>A4QKD8</accession>
<feature type="chain" id="PRO_0000294912" description="Small ribosomal subunit protein uS11c">
    <location>
        <begin position="1"/>
        <end position="138"/>
    </location>
</feature>
<feature type="region of interest" description="Disordered" evidence="2">
    <location>
        <begin position="1"/>
        <end position="23"/>
    </location>
</feature>
<feature type="compositionally biased region" description="Basic residues" evidence="2">
    <location>
        <begin position="9"/>
        <end position="23"/>
    </location>
</feature>
<sequence>MAKPILRIGSRKNTRSGSRKNVRRIPKGVIHVQASFNNTIVTVTDVRGRVISWSSAGTCGFKGTRRGTPFAAQTAAGNAIRAVVDQGMQRAEVRIKGPGLGRDAALRAIRRSGILLSFVRDVTPMPHNGCRPPKKRRV</sequence>
<proteinExistence type="inferred from homology"/>
<keyword id="KW-0150">Chloroplast</keyword>
<keyword id="KW-0934">Plastid</keyword>
<keyword id="KW-0687">Ribonucleoprotein</keyword>
<keyword id="KW-0689">Ribosomal protein</keyword>
<keyword id="KW-0694">RNA-binding</keyword>
<keyword id="KW-0699">rRNA-binding</keyword>